<dbReference type="EC" id="7.1.2.2" evidence="1"/>
<dbReference type="EMBL" id="CP000478">
    <property type="protein sequence ID" value="ABK18262.1"/>
    <property type="molecule type" value="Genomic_DNA"/>
</dbReference>
<dbReference type="RefSeq" id="WP_011699430.1">
    <property type="nucleotide sequence ID" value="NC_008554.1"/>
</dbReference>
<dbReference type="SMR" id="A0LLG0"/>
<dbReference type="FunCoup" id="A0LLG0">
    <property type="interactions" value="415"/>
</dbReference>
<dbReference type="STRING" id="335543.Sfum_2584"/>
<dbReference type="KEGG" id="sfu:Sfum_2584"/>
<dbReference type="eggNOG" id="COG0056">
    <property type="taxonomic scope" value="Bacteria"/>
</dbReference>
<dbReference type="HOGENOM" id="CLU_010091_2_1_7"/>
<dbReference type="InParanoid" id="A0LLG0"/>
<dbReference type="OrthoDB" id="9803053at2"/>
<dbReference type="Proteomes" id="UP000001784">
    <property type="component" value="Chromosome"/>
</dbReference>
<dbReference type="GO" id="GO:0005886">
    <property type="term" value="C:plasma membrane"/>
    <property type="evidence" value="ECO:0007669"/>
    <property type="project" value="UniProtKB-SubCell"/>
</dbReference>
<dbReference type="GO" id="GO:0045259">
    <property type="term" value="C:proton-transporting ATP synthase complex"/>
    <property type="evidence" value="ECO:0007669"/>
    <property type="project" value="UniProtKB-KW"/>
</dbReference>
<dbReference type="GO" id="GO:0043531">
    <property type="term" value="F:ADP binding"/>
    <property type="evidence" value="ECO:0007669"/>
    <property type="project" value="TreeGrafter"/>
</dbReference>
<dbReference type="GO" id="GO:0005524">
    <property type="term" value="F:ATP binding"/>
    <property type="evidence" value="ECO:0007669"/>
    <property type="project" value="UniProtKB-UniRule"/>
</dbReference>
<dbReference type="GO" id="GO:0046933">
    <property type="term" value="F:proton-transporting ATP synthase activity, rotational mechanism"/>
    <property type="evidence" value="ECO:0007669"/>
    <property type="project" value="UniProtKB-UniRule"/>
</dbReference>
<dbReference type="CDD" id="cd18113">
    <property type="entry name" value="ATP-synt_F1_alpha_C"/>
    <property type="match status" value="1"/>
</dbReference>
<dbReference type="CDD" id="cd18116">
    <property type="entry name" value="ATP-synt_F1_alpha_N"/>
    <property type="match status" value="1"/>
</dbReference>
<dbReference type="CDD" id="cd01132">
    <property type="entry name" value="F1-ATPase_alpha_CD"/>
    <property type="match status" value="1"/>
</dbReference>
<dbReference type="FunFam" id="1.20.150.20:FF:000001">
    <property type="entry name" value="ATP synthase subunit alpha"/>
    <property type="match status" value="1"/>
</dbReference>
<dbReference type="FunFam" id="2.40.30.20:FF:000001">
    <property type="entry name" value="ATP synthase subunit alpha"/>
    <property type="match status" value="1"/>
</dbReference>
<dbReference type="FunFam" id="3.40.50.300:FF:000002">
    <property type="entry name" value="ATP synthase subunit alpha"/>
    <property type="match status" value="1"/>
</dbReference>
<dbReference type="Gene3D" id="2.40.30.20">
    <property type="match status" value="1"/>
</dbReference>
<dbReference type="Gene3D" id="1.20.150.20">
    <property type="entry name" value="ATP synthase alpha/beta chain, C-terminal domain"/>
    <property type="match status" value="1"/>
</dbReference>
<dbReference type="Gene3D" id="3.40.50.300">
    <property type="entry name" value="P-loop containing nucleotide triphosphate hydrolases"/>
    <property type="match status" value="1"/>
</dbReference>
<dbReference type="HAMAP" id="MF_01346">
    <property type="entry name" value="ATP_synth_alpha_bact"/>
    <property type="match status" value="1"/>
</dbReference>
<dbReference type="InterPro" id="IPR023366">
    <property type="entry name" value="ATP_synth_asu-like_sf"/>
</dbReference>
<dbReference type="InterPro" id="IPR000793">
    <property type="entry name" value="ATP_synth_asu_C"/>
</dbReference>
<dbReference type="InterPro" id="IPR038376">
    <property type="entry name" value="ATP_synth_asu_C_sf"/>
</dbReference>
<dbReference type="InterPro" id="IPR033732">
    <property type="entry name" value="ATP_synth_F1_a_nt-bd_dom"/>
</dbReference>
<dbReference type="InterPro" id="IPR005294">
    <property type="entry name" value="ATP_synth_F1_asu"/>
</dbReference>
<dbReference type="InterPro" id="IPR020003">
    <property type="entry name" value="ATPase_a/bsu_AS"/>
</dbReference>
<dbReference type="InterPro" id="IPR004100">
    <property type="entry name" value="ATPase_F1/V1/A1_a/bsu_N"/>
</dbReference>
<dbReference type="InterPro" id="IPR036121">
    <property type="entry name" value="ATPase_F1/V1/A1_a/bsu_N_sf"/>
</dbReference>
<dbReference type="InterPro" id="IPR000194">
    <property type="entry name" value="ATPase_F1/V1/A1_a/bsu_nucl-bd"/>
</dbReference>
<dbReference type="InterPro" id="IPR027417">
    <property type="entry name" value="P-loop_NTPase"/>
</dbReference>
<dbReference type="NCBIfam" id="TIGR00962">
    <property type="entry name" value="atpA"/>
    <property type="match status" value="1"/>
</dbReference>
<dbReference type="NCBIfam" id="NF009884">
    <property type="entry name" value="PRK13343.1"/>
    <property type="match status" value="1"/>
</dbReference>
<dbReference type="PANTHER" id="PTHR48082">
    <property type="entry name" value="ATP SYNTHASE SUBUNIT ALPHA, MITOCHONDRIAL"/>
    <property type="match status" value="1"/>
</dbReference>
<dbReference type="PANTHER" id="PTHR48082:SF2">
    <property type="entry name" value="ATP SYNTHASE SUBUNIT ALPHA, MITOCHONDRIAL"/>
    <property type="match status" value="1"/>
</dbReference>
<dbReference type="Pfam" id="PF00006">
    <property type="entry name" value="ATP-synt_ab"/>
    <property type="match status" value="1"/>
</dbReference>
<dbReference type="Pfam" id="PF00306">
    <property type="entry name" value="ATP-synt_ab_C"/>
    <property type="match status" value="1"/>
</dbReference>
<dbReference type="Pfam" id="PF02874">
    <property type="entry name" value="ATP-synt_ab_N"/>
    <property type="match status" value="1"/>
</dbReference>
<dbReference type="PIRSF" id="PIRSF039088">
    <property type="entry name" value="F_ATPase_subunit_alpha"/>
    <property type="match status" value="1"/>
</dbReference>
<dbReference type="SUPFAM" id="SSF47917">
    <property type="entry name" value="C-terminal domain of alpha and beta subunits of F1 ATP synthase"/>
    <property type="match status" value="1"/>
</dbReference>
<dbReference type="SUPFAM" id="SSF50615">
    <property type="entry name" value="N-terminal domain of alpha and beta subunits of F1 ATP synthase"/>
    <property type="match status" value="1"/>
</dbReference>
<dbReference type="SUPFAM" id="SSF52540">
    <property type="entry name" value="P-loop containing nucleoside triphosphate hydrolases"/>
    <property type="match status" value="1"/>
</dbReference>
<dbReference type="PROSITE" id="PS00152">
    <property type="entry name" value="ATPASE_ALPHA_BETA"/>
    <property type="match status" value="1"/>
</dbReference>
<gene>
    <name evidence="1" type="primary">atpA</name>
    <name type="ordered locus">Sfum_2584</name>
</gene>
<name>ATPA_SYNFM</name>
<proteinExistence type="inferred from homology"/>
<evidence type="ECO:0000255" key="1">
    <source>
        <dbReference type="HAMAP-Rule" id="MF_01346"/>
    </source>
</evidence>
<protein>
    <recommendedName>
        <fullName evidence="1">ATP synthase subunit alpha</fullName>
        <ecNumber evidence="1">7.1.2.2</ecNumber>
    </recommendedName>
    <alternativeName>
        <fullName evidence="1">ATP synthase F1 sector subunit alpha</fullName>
    </alternativeName>
    <alternativeName>
        <fullName evidence="1">F-ATPase subunit alpha</fullName>
    </alternativeName>
</protein>
<keyword id="KW-0066">ATP synthesis</keyword>
<keyword id="KW-0067">ATP-binding</keyword>
<keyword id="KW-0997">Cell inner membrane</keyword>
<keyword id="KW-1003">Cell membrane</keyword>
<keyword id="KW-0139">CF(1)</keyword>
<keyword id="KW-0375">Hydrogen ion transport</keyword>
<keyword id="KW-0406">Ion transport</keyword>
<keyword id="KW-0472">Membrane</keyword>
<keyword id="KW-0547">Nucleotide-binding</keyword>
<keyword id="KW-1185">Reference proteome</keyword>
<keyword id="KW-1278">Translocase</keyword>
<keyword id="KW-0813">Transport</keyword>
<comment type="function">
    <text evidence="1">Produces ATP from ADP in the presence of a proton gradient across the membrane. The alpha chain is a regulatory subunit.</text>
</comment>
<comment type="catalytic activity">
    <reaction evidence="1">
        <text>ATP + H2O + 4 H(+)(in) = ADP + phosphate + 5 H(+)(out)</text>
        <dbReference type="Rhea" id="RHEA:57720"/>
        <dbReference type="ChEBI" id="CHEBI:15377"/>
        <dbReference type="ChEBI" id="CHEBI:15378"/>
        <dbReference type="ChEBI" id="CHEBI:30616"/>
        <dbReference type="ChEBI" id="CHEBI:43474"/>
        <dbReference type="ChEBI" id="CHEBI:456216"/>
        <dbReference type="EC" id="7.1.2.2"/>
    </reaction>
</comment>
<comment type="subunit">
    <text evidence="1">F-type ATPases have 2 components, CF(1) - the catalytic core - and CF(0) - the membrane proton channel. CF(1) has five subunits: alpha(3), beta(3), gamma(1), delta(1), epsilon(1). CF(0) has three main subunits: a(1), b(2) and c(9-12). The alpha and beta chains form an alternating ring which encloses part of the gamma chain. CF(1) is attached to CF(0) by a central stalk formed by the gamma and epsilon chains, while a peripheral stalk is formed by the delta and b chains.</text>
</comment>
<comment type="subcellular location">
    <subcellularLocation>
        <location evidence="1">Cell inner membrane</location>
        <topology evidence="1">Peripheral membrane protein</topology>
    </subcellularLocation>
</comment>
<comment type="similarity">
    <text evidence="1">Belongs to the ATPase alpha/beta chains family.</text>
</comment>
<organism>
    <name type="scientific">Syntrophobacter fumaroxidans (strain DSM 10017 / MPOB)</name>
    <dbReference type="NCBI Taxonomy" id="335543"/>
    <lineage>
        <taxon>Bacteria</taxon>
        <taxon>Pseudomonadati</taxon>
        <taxon>Thermodesulfobacteriota</taxon>
        <taxon>Syntrophobacteria</taxon>
        <taxon>Syntrophobacterales</taxon>
        <taxon>Syntrophobacteraceae</taxon>
        <taxon>Syntrophobacter</taxon>
    </lineage>
</organism>
<reference key="1">
    <citation type="submission" date="2006-10" db="EMBL/GenBank/DDBJ databases">
        <title>Complete sequence of Syntrophobacter fumaroxidans MPOB.</title>
        <authorList>
            <consortium name="US DOE Joint Genome Institute"/>
            <person name="Copeland A."/>
            <person name="Lucas S."/>
            <person name="Lapidus A."/>
            <person name="Barry K."/>
            <person name="Detter J.C."/>
            <person name="Glavina del Rio T."/>
            <person name="Hammon N."/>
            <person name="Israni S."/>
            <person name="Pitluck S."/>
            <person name="Goltsman E.G."/>
            <person name="Martinez M."/>
            <person name="Schmutz J."/>
            <person name="Larimer F."/>
            <person name="Land M."/>
            <person name="Hauser L."/>
            <person name="Kyrpides N."/>
            <person name="Kim E."/>
            <person name="Boone D.R."/>
            <person name="Brockman F."/>
            <person name="Culley D."/>
            <person name="Ferry J."/>
            <person name="Gunsalus R."/>
            <person name="McInerney M.J."/>
            <person name="Morrison M."/>
            <person name="Plugge C."/>
            <person name="Rohlin L."/>
            <person name="Scholten J."/>
            <person name="Sieber J."/>
            <person name="Stams A.J.M."/>
            <person name="Worm P."/>
            <person name="Henstra A.M."/>
            <person name="Richardson P."/>
        </authorList>
    </citation>
    <scope>NUCLEOTIDE SEQUENCE [LARGE SCALE GENOMIC DNA]</scope>
    <source>
        <strain>DSM 10017 / MPOB</strain>
    </source>
</reference>
<feature type="chain" id="PRO_0000302710" description="ATP synthase subunit alpha">
    <location>
        <begin position="1"/>
        <end position="505"/>
    </location>
</feature>
<feature type="binding site" evidence="1">
    <location>
        <begin position="172"/>
        <end position="179"/>
    </location>
    <ligand>
        <name>ATP</name>
        <dbReference type="ChEBI" id="CHEBI:30616"/>
    </ligand>
</feature>
<feature type="site" description="Required for activity" evidence="1">
    <location>
        <position position="365"/>
    </location>
</feature>
<sequence>MEIRAEEISQIIREQIKDYEKQVELSETGRVLSVGDGIARVYGVEKCMSMELLEFPTEHGVVYGLALNLEEDNVGVAIMGEDIHIKEGSEVKRTGRIASVPVGDAVLGRIIDSVGNPVDGKGPIEAKEFSRVEVIAPGVIARQSVNEPMYTGLKAIDAMTPVGRGQRELIIGDRQIGKTAIAVDTIINQKDSGIICIYVAVGQKKSTVAQVVETLRKHGAMDYTIVVAANASDPAALQYIAPYAGCAMGEYYRDKGRHALIIYDDLSKQAAAYRQVSLLLRRPPAREAYPGDIFYNHSRLLERAAKLNAELGGGSLTALPIIETQAGDVSAYIPTNVISITDGQIYLEPNLFFAGVRPAINVGLSVSRVGGAAQTKAMKQVAGRLRLDLAQYRELEAFAKFGSDLDKATQAQLNRGMRMTELLKQPQYQPMPAEREVMSLYAGTRGHLDNIPVEKVLEFEKEMLSFVDRKYPEILSEIKEKKIISEELDGKMKKALEEFAGVFQA</sequence>
<accession>A0LLG0</accession>